<protein>
    <recommendedName>
        <fullName evidence="1">Glucosamine-6-phosphate deaminase</fullName>
        <ecNumber evidence="1">3.5.99.6</ecNumber>
    </recommendedName>
    <alternativeName>
        <fullName evidence="1">GlcN6P deaminase</fullName>
        <shortName evidence="1">GNPDA</shortName>
    </alternativeName>
    <alternativeName>
        <fullName evidence="1">Glucosamine-6-phosphate isomerase</fullName>
    </alternativeName>
</protein>
<name>NAGB_STRZP</name>
<organism>
    <name type="scientific">Streptococcus pneumoniae (strain P1031)</name>
    <dbReference type="NCBI Taxonomy" id="488223"/>
    <lineage>
        <taxon>Bacteria</taxon>
        <taxon>Bacillati</taxon>
        <taxon>Bacillota</taxon>
        <taxon>Bacilli</taxon>
        <taxon>Lactobacillales</taxon>
        <taxon>Streptococcaceae</taxon>
        <taxon>Streptococcus</taxon>
    </lineage>
</organism>
<evidence type="ECO:0000255" key="1">
    <source>
        <dbReference type="HAMAP-Rule" id="MF_01241"/>
    </source>
</evidence>
<reference key="1">
    <citation type="journal article" date="2010" name="Genome Biol.">
        <title>Structure and dynamics of the pan-genome of Streptococcus pneumoniae and closely related species.</title>
        <authorList>
            <person name="Donati C."/>
            <person name="Hiller N.L."/>
            <person name="Tettelin H."/>
            <person name="Muzzi A."/>
            <person name="Croucher N.J."/>
            <person name="Angiuoli S.V."/>
            <person name="Oggioni M."/>
            <person name="Dunning Hotopp J.C."/>
            <person name="Hu F.Z."/>
            <person name="Riley D.R."/>
            <person name="Covacci A."/>
            <person name="Mitchell T.J."/>
            <person name="Bentley S.D."/>
            <person name="Kilian M."/>
            <person name="Ehrlich G.D."/>
            <person name="Rappuoli R."/>
            <person name="Moxon E.R."/>
            <person name="Masignani V."/>
        </authorList>
    </citation>
    <scope>NUCLEOTIDE SEQUENCE [LARGE SCALE GENOMIC DNA]</scope>
    <source>
        <strain>P1031</strain>
    </source>
</reference>
<sequence length="235" mass="25730">MKVIKVENQVQGGKVAFEILKEKLANGAQTLGLATGSSPLEFYKEIVESDLDFSNLTSVNLDEYVGLDGDNPQSYRYFMQENLFNQKPFKESFLPRGVKDNAEAEVERYNQILADHPVDLQILGIGRNGHIGFNEPGTPFDSQTHLVELDQSTIEANARFFAKIEDVPTQAISMGIKNILDAKSIILFAYGESKAEAIAGTVSGPVTENLPASSLQNHPDVTIIADAEALSLLEK</sequence>
<feature type="chain" id="PRO_1000165030" description="Glucosamine-6-phosphate deaminase">
    <location>
        <begin position="1"/>
        <end position="235"/>
    </location>
</feature>
<feature type="active site" description="Proton acceptor; for enolization step" evidence="1">
    <location>
        <position position="62"/>
    </location>
</feature>
<feature type="active site" description="For ring-opening step" evidence="1">
    <location>
        <position position="128"/>
    </location>
</feature>
<feature type="active site" description="Proton acceptor; for ring-opening step" evidence="1">
    <location>
        <position position="130"/>
    </location>
</feature>
<feature type="active site" description="For ring-opening step" evidence="1">
    <location>
        <position position="135"/>
    </location>
</feature>
<keyword id="KW-0119">Carbohydrate metabolism</keyword>
<keyword id="KW-0378">Hydrolase</keyword>
<comment type="function">
    <text evidence="1">Catalyzes the reversible isomerization-deamination of glucosamine 6-phosphate (GlcN6P) to form fructose 6-phosphate (Fru6P) and ammonium ion.</text>
</comment>
<comment type="catalytic activity">
    <reaction evidence="1">
        <text>alpha-D-glucosamine 6-phosphate + H2O = beta-D-fructose 6-phosphate + NH4(+)</text>
        <dbReference type="Rhea" id="RHEA:12172"/>
        <dbReference type="ChEBI" id="CHEBI:15377"/>
        <dbReference type="ChEBI" id="CHEBI:28938"/>
        <dbReference type="ChEBI" id="CHEBI:57634"/>
        <dbReference type="ChEBI" id="CHEBI:75989"/>
        <dbReference type="EC" id="3.5.99.6"/>
    </reaction>
</comment>
<comment type="pathway">
    <text evidence="1">Amino-sugar metabolism; N-acetylneuraminate degradation; D-fructose 6-phosphate from N-acetylneuraminate: step 5/5.</text>
</comment>
<comment type="similarity">
    <text evidence="1">Belongs to the glucosamine/galactosamine-6-phosphate isomerase family. NagB subfamily.</text>
</comment>
<dbReference type="EC" id="3.5.99.6" evidence="1"/>
<dbReference type="EMBL" id="CP000920">
    <property type="protein sequence ID" value="ACO21253.1"/>
    <property type="molecule type" value="Genomic_DNA"/>
</dbReference>
<dbReference type="RefSeq" id="WP_000864617.1">
    <property type="nucleotide sequence ID" value="NC_012467.1"/>
</dbReference>
<dbReference type="SMR" id="C1CLC3"/>
<dbReference type="KEGG" id="spp:SPP_1434"/>
<dbReference type="HOGENOM" id="CLU_049611_1_0_9"/>
<dbReference type="UniPathway" id="UPA00629">
    <property type="reaction ID" value="UER00684"/>
</dbReference>
<dbReference type="GO" id="GO:0005737">
    <property type="term" value="C:cytoplasm"/>
    <property type="evidence" value="ECO:0007669"/>
    <property type="project" value="TreeGrafter"/>
</dbReference>
<dbReference type="GO" id="GO:0004342">
    <property type="term" value="F:glucosamine-6-phosphate deaminase activity"/>
    <property type="evidence" value="ECO:0007669"/>
    <property type="project" value="UniProtKB-UniRule"/>
</dbReference>
<dbReference type="GO" id="GO:0042802">
    <property type="term" value="F:identical protein binding"/>
    <property type="evidence" value="ECO:0007669"/>
    <property type="project" value="TreeGrafter"/>
</dbReference>
<dbReference type="GO" id="GO:0005975">
    <property type="term" value="P:carbohydrate metabolic process"/>
    <property type="evidence" value="ECO:0007669"/>
    <property type="project" value="InterPro"/>
</dbReference>
<dbReference type="GO" id="GO:0006043">
    <property type="term" value="P:glucosamine catabolic process"/>
    <property type="evidence" value="ECO:0007669"/>
    <property type="project" value="TreeGrafter"/>
</dbReference>
<dbReference type="GO" id="GO:0006046">
    <property type="term" value="P:N-acetylglucosamine catabolic process"/>
    <property type="evidence" value="ECO:0007669"/>
    <property type="project" value="TreeGrafter"/>
</dbReference>
<dbReference type="GO" id="GO:0019262">
    <property type="term" value="P:N-acetylneuraminate catabolic process"/>
    <property type="evidence" value="ECO:0007669"/>
    <property type="project" value="UniProtKB-UniRule"/>
</dbReference>
<dbReference type="CDD" id="cd01399">
    <property type="entry name" value="GlcN6P_deaminase"/>
    <property type="match status" value="1"/>
</dbReference>
<dbReference type="FunFam" id="3.40.50.1360:FF:000003">
    <property type="entry name" value="Glucosamine-6-phosphate deaminase"/>
    <property type="match status" value="1"/>
</dbReference>
<dbReference type="Gene3D" id="3.40.50.1360">
    <property type="match status" value="1"/>
</dbReference>
<dbReference type="HAMAP" id="MF_01241">
    <property type="entry name" value="GlcN6P_deamin"/>
    <property type="match status" value="1"/>
</dbReference>
<dbReference type="InterPro" id="IPR006148">
    <property type="entry name" value="Glc/Gal-6P_isomerase"/>
</dbReference>
<dbReference type="InterPro" id="IPR004547">
    <property type="entry name" value="Glucosamine6P_isomerase"/>
</dbReference>
<dbReference type="InterPro" id="IPR018321">
    <property type="entry name" value="Glucosamine6P_isomerase_CS"/>
</dbReference>
<dbReference type="InterPro" id="IPR037171">
    <property type="entry name" value="NagB/RpiA_transferase-like"/>
</dbReference>
<dbReference type="PANTHER" id="PTHR11280">
    <property type="entry name" value="GLUCOSAMINE-6-PHOSPHATE ISOMERASE"/>
    <property type="match status" value="1"/>
</dbReference>
<dbReference type="PANTHER" id="PTHR11280:SF5">
    <property type="entry name" value="GLUCOSAMINE-6-PHOSPHATE ISOMERASE"/>
    <property type="match status" value="1"/>
</dbReference>
<dbReference type="Pfam" id="PF01182">
    <property type="entry name" value="Glucosamine_iso"/>
    <property type="match status" value="1"/>
</dbReference>
<dbReference type="SUPFAM" id="SSF100950">
    <property type="entry name" value="NagB/RpiA/CoA transferase-like"/>
    <property type="match status" value="1"/>
</dbReference>
<dbReference type="PROSITE" id="PS01161">
    <property type="entry name" value="GLC_GALNAC_ISOMERASE"/>
    <property type="match status" value="1"/>
</dbReference>
<gene>
    <name evidence="1" type="primary">nagB</name>
    <name type="ordered locus">SPP_1434</name>
</gene>
<accession>C1CLC3</accession>
<proteinExistence type="inferred from homology"/>